<dbReference type="EMBL" id="CP000783">
    <property type="protein sequence ID" value="ABU78509.1"/>
    <property type="molecule type" value="Genomic_DNA"/>
</dbReference>
<dbReference type="RefSeq" id="WP_004385583.1">
    <property type="nucleotide sequence ID" value="NC_009778.1"/>
</dbReference>
<dbReference type="SMR" id="A7MIB1"/>
<dbReference type="GeneID" id="56731972"/>
<dbReference type="KEGG" id="esa:ESA_03288"/>
<dbReference type="HOGENOM" id="CLU_128074_0_0_6"/>
<dbReference type="Proteomes" id="UP000000260">
    <property type="component" value="Chromosome"/>
</dbReference>
<dbReference type="GO" id="GO:0070987">
    <property type="term" value="P:error-free translesion synthesis"/>
    <property type="evidence" value="ECO:0007669"/>
    <property type="project" value="TreeGrafter"/>
</dbReference>
<dbReference type="Gene3D" id="2.60.40.1470">
    <property type="entry name" value="ApaG domain"/>
    <property type="match status" value="1"/>
</dbReference>
<dbReference type="HAMAP" id="MF_00791">
    <property type="entry name" value="ApaG"/>
    <property type="match status" value="1"/>
</dbReference>
<dbReference type="InterPro" id="IPR007474">
    <property type="entry name" value="ApaG_domain"/>
</dbReference>
<dbReference type="InterPro" id="IPR036767">
    <property type="entry name" value="ApaG_sf"/>
</dbReference>
<dbReference type="InterPro" id="IPR023065">
    <property type="entry name" value="Uncharacterised_ApaG"/>
</dbReference>
<dbReference type="NCBIfam" id="NF003967">
    <property type="entry name" value="PRK05461.1"/>
    <property type="match status" value="1"/>
</dbReference>
<dbReference type="PANTHER" id="PTHR14289">
    <property type="entry name" value="F-BOX ONLY PROTEIN 3"/>
    <property type="match status" value="1"/>
</dbReference>
<dbReference type="PANTHER" id="PTHR14289:SF16">
    <property type="entry name" value="POLYMERASE DELTA-INTERACTING PROTEIN 2"/>
    <property type="match status" value="1"/>
</dbReference>
<dbReference type="Pfam" id="PF04379">
    <property type="entry name" value="DUF525"/>
    <property type="match status" value="1"/>
</dbReference>
<dbReference type="SUPFAM" id="SSF110069">
    <property type="entry name" value="ApaG-like"/>
    <property type="match status" value="1"/>
</dbReference>
<dbReference type="PROSITE" id="PS51087">
    <property type="entry name" value="APAG"/>
    <property type="match status" value="1"/>
</dbReference>
<feature type="chain" id="PRO_1000083623" description="Protein ApaG">
    <location>
        <begin position="1"/>
        <end position="125"/>
    </location>
</feature>
<feature type="domain" description="ApaG" evidence="1">
    <location>
        <begin position="1"/>
        <end position="125"/>
    </location>
</feature>
<gene>
    <name evidence="1" type="primary">apaG</name>
    <name type="ordered locus">ESA_03288</name>
</gene>
<organism>
    <name type="scientific">Cronobacter sakazakii (strain ATCC BAA-894)</name>
    <name type="common">Enterobacter sakazakii</name>
    <dbReference type="NCBI Taxonomy" id="290339"/>
    <lineage>
        <taxon>Bacteria</taxon>
        <taxon>Pseudomonadati</taxon>
        <taxon>Pseudomonadota</taxon>
        <taxon>Gammaproteobacteria</taxon>
        <taxon>Enterobacterales</taxon>
        <taxon>Enterobacteriaceae</taxon>
        <taxon>Cronobacter</taxon>
    </lineage>
</organism>
<accession>A7MIB1</accession>
<proteinExistence type="inferred from homology"/>
<evidence type="ECO:0000255" key="1">
    <source>
        <dbReference type="HAMAP-Rule" id="MF_00791"/>
    </source>
</evidence>
<protein>
    <recommendedName>
        <fullName evidence="1">Protein ApaG</fullName>
    </recommendedName>
</protein>
<sequence>MADSPRVCVQVQSVYIEAQSSPEDERFVFAYTVTVRNLGRTPVQLLGRYWLITNGNGKETEVQGEGVVGVQPHIQPGGEYQYTSGAVIETPFGTMQGHYEMVDDQGNGFHLDIPVFRLAVPTLIH</sequence>
<keyword id="KW-1185">Reference proteome</keyword>
<name>APAG_CROS8</name>
<reference key="1">
    <citation type="journal article" date="2010" name="PLoS ONE">
        <title>Genome sequence of Cronobacter sakazakii BAA-894 and comparative genomic hybridization analysis with other Cronobacter species.</title>
        <authorList>
            <person name="Kucerova E."/>
            <person name="Clifton S.W."/>
            <person name="Xia X.Q."/>
            <person name="Long F."/>
            <person name="Porwollik S."/>
            <person name="Fulton L."/>
            <person name="Fronick C."/>
            <person name="Minx P."/>
            <person name="Kyung K."/>
            <person name="Warren W."/>
            <person name="Fulton R."/>
            <person name="Feng D."/>
            <person name="Wollam A."/>
            <person name="Shah N."/>
            <person name="Bhonagiri V."/>
            <person name="Nash W.E."/>
            <person name="Hallsworth-Pepin K."/>
            <person name="Wilson R.K."/>
            <person name="McClelland M."/>
            <person name="Forsythe S.J."/>
        </authorList>
    </citation>
    <scope>NUCLEOTIDE SEQUENCE [LARGE SCALE GENOMIC DNA]</scope>
    <source>
        <strain>ATCC BAA-894</strain>
    </source>
</reference>